<proteinExistence type="inferred from homology"/>
<sequence>MSRVAKAPVTIPAGVEVTLNGQELSIKGGKGSLVRSIHAGVEVTKEDNVLKFAPRDGIAGADAQAGTARALANNMVIGVTQGFERKLQLVGVGYKASIKGNAVALALGFSHPVEHALPAGVTAECPTATEIVLRGVDKQLVGQVAADIRSYRAPEPYKGKGVRYANEQVRTKEAKKK</sequence>
<comment type="function">
    <text evidence="1">This protein binds to the 23S rRNA, and is important in its secondary structure. It is located near the subunit interface in the base of the L7/L12 stalk, and near the tRNA binding site of the peptidyltransferase center.</text>
</comment>
<comment type="subunit">
    <text evidence="1">Part of the 50S ribosomal subunit.</text>
</comment>
<comment type="similarity">
    <text evidence="1">Belongs to the universal ribosomal protein uL6 family.</text>
</comment>
<feature type="chain" id="PRO_1000055190" description="Large ribosomal subunit protein uL6">
    <location>
        <begin position="1"/>
        <end position="177"/>
    </location>
</feature>
<evidence type="ECO:0000255" key="1">
    <source>
        <dbReference type="HAMAP-Rule" id="MF_01365"/>
    </source>
</evidence>
<evidence type="ECO:0000305" key="2"/>
<gene>
    <name evidence="1" type="primary">rplF</name>
    <name type="ordered locus">ASA_4072</name>
</gene>
<organism>
    <name type="scientific">Aeromonas salmonicida (strain A449)</name>
    <dbReference type="NCBI Taxonomy" id="382245"/>
    <lineage>
        <taxon>Bacteria</taxon>
        <taxon>Pseudomonadati</taxon>
        <taxon>Pseudomonadota</taxon>
        <taxon>Gammaproteobacteria</taxon>
        <taxon>Aeromonadales</taxon>
        <taxon>Aeromonadaceae</taxon>
        <taxon>Aeromonas</taxon>
    </lineage>
</organism>
<dbReference type="EMBL" id="CP000644">
    <property type="protein sequence ID" value="ABO92013.1"/>
    <property type="molecule type" value="Genomic_DNA"/>
</dbReference>
<dbReference type="RefSeq" id="WP_005319720.1">
    <property type="nucleotide sequence ID" value="NC_009348.1"/>
</dbReference>
<dbReference type="SMR" id="A4SSZ1"/>
<dbReference type="STRING" id="29491.GCA_000820065_03480"/>
<dbReference type="GeneID" id="92721513"/>
<dbReference type="KEGG" id="asa:ASA_4072"/>
<dbReference type="eggNOG" id="COG0097">
    <property type="taxonomic scope" value="Bacteria"/>
</dbReference>
<dbReference type="HOGENOM" id="CLU_065464_1_2_6"/>
<dbReference type="Proteomes" id="UP000000225">
    <property type="component" value="Chromosome"/>
</dbReference>
<dbReference type="GO" id="GO:0022625">
    <property type="term" value="C:cytosolic large ribosomal subunit"/>
    <property type="evidence" value="ECO:0007669"/>
    <property type="project" value="TreeGrafter"/>
</dbReference>
<dbReference type="GO" id="GO:0019843">
    <property type="term" value="F:rRNA binding"/>
    <property type="evidence" value="ECO:0007669"/>
    <property type="project" value="UniProtKB-UniRule"/>
</dbReference>
<dbReference type="GO" id="GO:0003735">
    <property type="term" value="F:structural constituent of ribosome"/>
    <property type="evidence" value="ECO:0007669"/>
    <property type="project" value="InterPro"/>
</dbReference>
<dbReference type="GO" id="GO:0002181">
    <property type="term" value="P:cytoplasmic translation"/>
    <property type="evidence" value="ECO:0007669"/>
    <property type="project" value="TreeGrafter"/>
</dbReference>
<dbReference type="FunFam" id="3.90.930.12:FF:000001">
    <property type="entry name" value="50S ribosomal protein L6"/>
    <property type="match status" value="1"/>
</dbReference>
<dbReference type="FunFam" id="3.90.930.12:FF:000002">
    <property type="entry name" value="50S ribosomal protein L6"/>
    <property type="match status" value="1"/>
</dbReference>
<dbReference type="Gene3D" id="3.90.930.12">
    <property type="entry name" value="Ribosomal protein L6, alpha-beta domain"/>
    <property type="match status" value="2"/>
</dbReference>
<dbReference type="HAMAP" id="MF_01365_B">
    <property type="entry name" value="Ribosomal_uL6_B"/>
    <property type="match status" value="1"/>
</dbReference>
<dbReference type="InterPro" id="IPR000702">
    <property type="entry name" value="Ribosomal_uL6-like"/>
</dbReference>
<dbReference type="InterPro" id="IPR036789">
    <property type="entry name" value="Ribosomal_uL6-like_a/b-dom_sf"/>
</dbReference>
<dbReference type="InterPro" id="IPR020040">
    <property type="entry name" value="Ribosomal_uL6_a/b-dom"/>
</dbReference>
<dbReference type="InterPro" id="IPR019906">
    <property type="entry name" value="Ribosomal_uL6_bac-type"/>
</dbReference>
<dbReference type="InterPro" id="IPR002358">
    <property type="entry name" value="Ribosomal_uL6_CS"/>
</dbReference>
<dbReference type="NCBIfam" id="TIGR03654">
    <property type="entry name" value="L6_bact"/>
    <property type="match status" value="1"/>
</dbReference>
<dbReference type="PANTHER" id="PTHR11655">
    <property type="entry name" value="60S/50S RIBOSOMAL PROTEIN L6/L9"/>
    <property type="match status" value="1"/>
</dbReference>
<dbReference type="PANTHER" id="PTHR11655:SF14">
    <property type="entry name" value="LARGE RIBOSOMAL SUBUNIT PROTEIN UL6M"/>
    <property type="match status" value="1"/>
</dbReference>
<dbReference type="Pfam" id="PF00347">
    <property type="entry name" value="Ribosomal_L6"/>
    <property type="match status" value="2"/>
</dbReference>
<dbReference type="PIRSF" id="PIRSF002162">
    <property type="entry name" value="Ribosomal_L6"/>
    <property type="match status" value="1"/>
</dbReference>
<dbReference type="PRINTS" id="PR00059">
    <property type="entry name" value="RIBOSOMALL6"/>
</dbReference>
<dbReference type="SUPFAM" id="SSF56053">
    <property type="entry name" value="Ribosomal protein L6"/>
    <property type="match status" value="2"/>
</dbReference>
<dbReference type="PROSITE" id="PS00525">
    <property type="entry name" value="RIBOSOMAL_L6_1"/>
    <property type="match status" value="1"/>
</dbReference>
<keyword id="KW-0687">Ribonucleoprotein</keyword>
<keyword id="KW-0689">Ribosomal protein</keyword>
<keyword id="KW-0694">RNA-binding</keyword>
<keyword id="KW-0699">rRNA-binding</keyword>
<accession>A4SSZ1</accession>
<protein>
    <recommendedName>
        <fullName evidence="1">Large ribosomal subunit protein uL6</fullName>
    </recommendedName>
    <alternativeName>
        <fullName evidence="2">50S ribosomal protein L6</fullName>
    </alternativeName>
</protein>
<name>RL6_AERS4</name>
<reference key="1">
    <citation type="journal article" date="2008" name="BMC Genomics">
        <title>The genome of Aeromonas salmonicida subsp. salmonicida A449: insights into the evolution of a fish pathogen.</title>
        <authorList>
            <person name="Reith M.E."/>
            <person name="Singh R.K."/>
            <person name="Curtis B."/>
            <person name="Boyd J.M."/>
            <person name="Bouevitch A."/>
            <person name="Kimball J."/>
            <person name="Munholland J."/>
            <person name="Murphy C."/>
            <person name="Sarty D."/>
            <person name="Williams J."/>
            <person name="Nash J.H."/>
            <person name="Johnson S.C."/>
            <person name="Brown L.L."/>
        </authorList>
    </citation>
    <scope>NUCLEOTIDE SEQUENCE [LARGE SCALE GENOMIC DNA]</scope>
    <source>
        <strain>A449</strain>
    </source>
</reference>